<comment type="function">
    <text evidence="1">Lignin degradation and detoxification of lignin-derived products.</text>
</comment>
<comment type="catalytic activity">
    <reaction>
        <text>4 hydroquinone + O2 = 4 benzosemiquinone + 2 H2O</text>
        <dbReference type="Rhea" id="RHEA:11276"/>
        <dbReference type="ChEBI" id="CHEBI:15377"/>
        <dbReference type="ChEBI" id="CHEBI:15379"/>
        <dbReference type="ChEBI" id="CHEBI:17594"/>
        <dbReference type="ChEBI" id="CHEBI:17977"/>
        <dbReference type="EC" id="1.10.3.2"/>
    </reaction>
</comment>
<comment type="cofactor">
    <cofactor evidence="1">
        <name>Cu cation</name>
        <dbReference type="ChEBI" id="CHEBI:23378"/>
    </cofactor>
    <text evidence="1">Binds 4 Cu cations per monomer.</text>
</comment>
<comment type="subcellular location">
    <subcellularLocation>
        <location evidence="5">Secreted</location>
        <location evidence="5">Extracellular space</location>
        <location evidence="5">Apoplast</location>
    </subcellularLocation>
</comment>
<comment type="tissue specificity">
    <text evidence="3 4">Predominantly expressed in roots.</text>
</comment>
<comment type="similarity">
    <text evidence="5">Belongs to the multicopper oxidase family.</text>
</comment>
<reference key="1">
    <citation type="journal article" date="2000" name="Nature">
        <title>Sequence and analysis of chromosome 5 of the plant Arabidopsis thaliana.</title>
        <authorList>
            <person name="Tabata S."/>
            <person name="Kaneko T."/>
            <person name="Nakamura Y."/>
            <person name="Kotani H."/>
            <person name="Kato T."/>
            <person name="Asamizu E."/>
            <person name="Miyajima N."/>
            <person name="Sasamoto S."/>
            <person name="Kimura T."/>
            <person name="Hosouchi T."/>
            <person name="Kawashima K."/>
            <person name="Kohara M."/>
            <person name="Matsumoto M."/>
            <person name="Matsuno A."/>
            <person name="Muraki A."/>
            <person name="Nakayama S."/>
            <person name="Nakazaki N."/>
            <person name="Naruo K."/>
            <person name="Okumura S."/>
            <person name="Shinpo S."/>
            <person name="Takeuchi C."/>
            <person name="Wada T."/>
            <person name="Watanabe A."/>
            <person name="Yamada M."/>
            <person name="Yasuda M."/>
            <person name="Sato S."/>
            <person name="de la Bastide M."/>
            <person name="Huang E."/>
            <person name="Spiegel L."/>
            <person name="Gnoj L."/>
            <person name="O'Shaughnessy A."/>
            <person name="Preston R."/>
            <person name="Habermann K."/>
            <person name="Murray J."/>
            <person name="Johnson D."/>
            <person name="Rohlfing T."/>
            <person name="Nelson J."/>
            <person name="Stoneking T."/>
            <person name="Pepin K."/>
            <person name="Spieth J."/>
            <person name="Sekhon M."/>
            <person name="Armstrong J."/>
            <person name="Becker M."/>
            <person name="Belter E."/>
            <person name="Cordum H."/>
            <person name="Cordes M."/>
            <person name="Courtney L."/>
            <person name="Courtney W."/>
            <person name="Dante M."/>
            <person name="Du H."/>
            <person name="Edwards J."/>
            <person name="Fryman J."/>
            <person name="Haakensen B."/>
            <person name="Lamar E."/>
            <person name="Latreille P."/>
            <person name="Leonard S."/>
            <person name="Meyer R."/>
            <person name="Mulvaney E."/>
            <person name="Ozersky P."/>
            <person name="Riley A."/>
            <person name="Strowmatt C."/>
            <person name="Wagner-McPherson C."/>
            <person name="Wollam A."/>
            <person name="Yoakum M."/>
            <person name="Bell M."/>
            <person name="Dedhia N."/>
            <person name="Parnell L."/>
            <person name="Shah R."/>
            <person name="Rodriguez M."/>
            <person name="Hoon See L."/>
            <person name="Vil D."/>
            <person name="Baker J."/>
            <person name="Kirchoff K."/>
            <person name="Toth K."/>
            <person name="King L."/>
            <person name="Bahret A."/>
            <person name="Miller B."/>
            <person name="Marra M.A."/>
            <person name="Martienssen R."/>
            <person name="McCombie W.R."/>
            <person name="Wilson R.K."/>
            <person name="Murphy G."/>
            <person name="Bancroft I."/>
            <person name="Volckaert G."/>
            <person name="Wambutt R."/>
            <person name="Duesterhoeft A."/>
            <person name="Stiekema W."/>
            <person name="Pohl T."/>
            <person name="Entian K.-D."/>
            <person name="Terryn N."/>
            <person name="Hartley N."/>
            <person name="Bent E."/>
            <person name="Johnson S."/>
            <person name="Langham S.-A."/>
            <person name="McCullagh B."/>
            <person name="Robben J."/>
            <person name="Grymonprez B."/>
            <person name="Zimmermann W."/>
            <person name="Ramsperger U."/>
            <person name="Wedler H."/>
            <person name="Balke K."/>
            <person name="Wedler E."/>
            <person name="Peters S."/>
            <person name="van Staveren M."/>
            <person name="Dirkse W."/>
            <person name="Mooijman P."/>
            <person name="Klein Lankhorst R."/>
            <person name="Weitzenegger T."/>
            <person name="Bothe G."/>
            <person name="Rose M."/>
            <person name="Hauf J."/>
            <person name="Berneiser S."/>
            <person name="Hempel S."/>
            <person name="Feldpausch M."/>
            <person name="Lamberth S."/>
            <person name="Villarroel R."/>
            <person name="Gielen J."/>
            <person name="Ardiles W."/>
            <person name="Bents O."/>
            <person name="Lemcke K."/>
            <person name="Kolesov G."/>
            <person name="Mayer K.F.X."/>
            <person name="Rudd S."/>
            <person name="Schoof H."/>
            <person name="Schueller C."/>
            <person name="Zaccaria P."/>
            <person name="Mewes H.-W."/>
            <person name="Bevan M."/>
            <person name="Fransz P.F."/>
        </authorList>
    </citation>
    <scope>NUCLEOTIDE SEQUENCE [LARGE SCALE GENOMIC DNA]</scope>
    <source>
        <strain>cv. Columbia</strain>
    </source>
</reference>
<reference key="2">
    <citation type="journal article" date="2017" name="Plant J.">
        <title>Araport11: a complete reannotation of the Arabidopsis thaliana reference genome.</title>
        <authorList>
            <person name="Cheng C.Y."/>
            <person name="Krishnakumar V."/>
            <person name="Chan A.P."/>
            <person name="Thibaud-Nissen F."/>
            <person name="Schobel S."/>
            <person name="Town C.D."/>
        </authorList>
    </citation>
    <scope>GENOME REANNOTATION</scope>
    <source>
        <strain>cv. Columbia</strain>
    </source>
</reference>
<reference key="3">
    <citation type="journal article" date="2005" name="Planta">
        <title>Gene structure and molecular analysis of the laccase-like multicopper oxidase (LMCO) gene family in Arabidopsis thaliana.</title>
        <authorList>
            <person name="McCaig B.C."/>
            <person name="Meagher R.B."/>
            <person name="Dean J.F.D."/>
        </authorList>
    </citation>
    <scope>TISSUE SPECIFICITY</scope>
</reference>
<reference key="4">
    <citation type="journal article" date="2006" name="J. Exp. Bot.">
        <title>Mutant identification and characterization of the laccase gene family in Arabidopsis.</title>
        <authorList>
            <person name="Cai X."/>
            <person name="Davis E.J."/>
            <person name="Ballif J."/>
            <person name="Liang M."/>
            <person name="Bushman E."/>
            <person name="Haroldsen V."/>
            <person name="Torabinejad J."/>
            <person name="Wu Y."/>
        </authorList>
    </citation>
    <scope>TISSUE SPECIFICITY</scope>
</reference>
<gene>
    <name type="primary">LAC9</name>
    <name type="ordered locus">At5g01050</name>
    <name type="ORF">F7J8.30</name>
</gene>
<evidence type="ECO:0000250" key="1"/>
<evidence type="ECO:0000255" key="2"/>
<evidence type="ECO:0000269" key="3">
    <source>
    </source>
</evidence>
<evidence type="ECO:0000269" key="4">
    <source>
    </source>
</evidence>
<evidence type="ECO:0000305" key="5"/>
<organism>
    <name type="scientific">Arabidopsis thaliana</name>
    <name type="common">Mouse-ear cress</name>
    <dbReference type="NCBI Taxonomy" id="3702"/>
    <lineage>
        <taxon>Eukaryota</taxon>
        <taxon>Viridiplantae</taxon>
        <taxon>Streptophyta</taxon>
        <taxon>Embryophyta</taxon>
        <taxon>Tracheophyta</taxon>
        <taxon>Spermatophyta</taxon>
        <taxon>Magnoliopsida</taxon>
        <taxon>eudicotyledons</taxon>
        <taxon>Gunneridae</taxon>
        <taxon>Pentapetalae</taxon>
        <taxon>rosids</taxon>
        <taxon>malvids</taxon>
        <taxon>Brassicales</taxon>
        <taxon>Brassicaceae</taxon>
        <taxon>Camelineae</taxon>
        <taxon>Arabidopsis</taxon>
    </lineage>
</organism>
<sequence>MPRVHHSLSNQAFLVLLLFSSIASAAIVEHVLHVKDVVVTPLCKEQMIPIVNGSLPGPTINVREGDTLVVHVINKSTYNVTIHWHGVFQLKSVWMDGANMITQCPIQPSNNFTYQFDITGQEGTLLWHAHVVNLRATIHGALIIRPRSGRPYPFPKPYKEVPLIFQQWWDTDVRLLELRPAPVSDAYLINGLAGDSYPCSKNRMFNLKVVQGKTYLLRIINAALNTHLFFKIANHNVTVVAVDAVYTTPYLTDVMILTPGQTIDAILTADQPIGTYYMAIIPYFSAIGVPASPDTKPTRGLIVYEGATSSSSPTKPWMPPANDIPTAHRFSSNITSLVGGPHWTPVPRHVDEKMFITMGLGLDPCPSNAKCVGPLDQRLAGSLNNRTFMIPERISMQEAYFYNITGVYTDDFPDQPPLKFDFTKFEQHPTNSDMEMMFPERKTSVKTIRFNSTVEIVLQNTGILTPESHPMHLHGFNFYVLGYGFGNYDPIRDARKLNLFNPQMHNTVGVPPGGWVVLRFIANNPGIWLFHCHMDAHLPLGIMMAFIVQNGPTRETSLPSPPSNLPQCTRDPTIYDSRTTNVDMSY</sequence>
<feature type="signal peptide" evidence="2">
    <location>
        <begin position="1"/>
        <end position="25"/>
    </location>
</feature>
<feature type="chain" id="PRO_0000283637" description="Laccase-9">
    <location>
        <begin position="26"/>
        <end position="586"/>
    </location>
</feature>
<feature type="domain" description="Plastocyanin-like 1">
    <location>
        <begin position="33"/>
        <end position="149"/>
    </location>
</feature>
<feature type="domain" description="Plastocyanin-like 2">
    <location>
        <begin position="159"/>
        <end position="307"/>
    </location>
</feature>
<feature type="domain" description="Plastocyanin-like 3">
    <location>
        <begin position="411"/>
        <end position="552"/>
    </location>
</feature>
<feature type="binding site" description="type 2 copper site" evidence="1">
    <location>
        <position position="83"/>
    </location>
    <ligand>
        <name>Cu cation</name>
        <dbReference type="ChEBI" id="CHEBI:23378"/>
        <label>1</label>
    </ligand>
</feature>
<feature type="binding site" description="type 3 copper site" evidence="1">
    <location>
        <position position="85"/>
    </location>
    <ligand>
        <name>Cu cation</name>
        <dbReference type="ChEBI" id="CHEBI:23378"/>
        <label>2</label>
    </ligand>
</feature>
<feature type="binding site" description="type 3 copper site" evidence="1">
    <location>
        <position position="128"/>
    </location>
    <ligand>
        <name>Cu cation</name>
        <dbReference type="ChEBI" id="CHEBI:23378"/>
        <label>2</label>
    </ligand>
</feature>
<feature type="binding site" description="type 3 copper site" evidence="1">
    <location>
        <position position="130"/>
    </location>
    <ligand>
        <name>Cu cation</name>
        <dbReference type="ChEBI" id="CHEBI:23378"/>
        <label>3</label>
    </ligand>
</feature>
<feature type="binding site" description="type 1 copper site" evidence="1">
    <location>
        <position position="469"/>
    </location>
    <ligand>
        <name>Cu cation</name>
        <dbReference type="ChEBI" id="CHEBI:23378"/>
        <label>4</label>
    </ligand>
</feature>
<feature type="binding site" description="type 2 copper site" evidence="1">
    <location>
        <position position="472"/>
    </location>
    <ligand>
        <name>Cu cation</name>
        <dbReference type="ChEBI" id="CHEBI:23378"/>
        <label>1</label>
    </ligand>
</feature>
<feature type="binding site" description="type 3 copper site" evidence="1">
    <location>
        <position position="474"/>
    </location>
    <ligand>
        <name>Cu cation</name>
        <dbReference type="ChEBI" id="CHEBI:23378"/>
        <label>3</label>
    </ligand>
</feature>
<feature type="binding site" description="type 3 copper site" evidence="1">
    <location>
        <position position="531"/>
    </location>
    <ligand>
        <name>Cu cation</name>
        <dbReference type="ChEBI" id="CHEBI:23378"/>
        <label>3</label>
    </ligand>
</feature>
<feature type="binding site" description="type 1 copper site" evidence="1">
    <location>
        <position position="532"/>
    </location>
    <ligand>
        <name>Cu cation</name>
        <dbReference type="ChEBI" id="CHEBI:23378"/>
        <label>4</label>
    </ligand>
</feature>
<feature type="binding site" description="type 3 copper site" evidence="1">
    <location>
        <position position="533"/>
    </location>
    <ligand>
        <name>Cu cation</name>
        <dbReference type="ChEBI" id="CHEBI:23378"/>
        <label>2</label>
    </ligand>
</feature>
<feature type="binding site" description="type 1 copper site" evidence="1">
    <location>
        <position position="537"/>
    </location>
    <ligand>
        <name>Cu cation</name>
        <dbReference type="ChEBI" id="CHEBI:23378"/>
        <label>4</label>
    </ligand>
</feature>
<feature type="glycosylation site" description="N-linked (GlcNAc...) asparagine" evidence="2">
    <location>
        <position position="52"/>
    </location>
</feature>
<feature type="glycosylation site" description="N-linked (GlcNAc...) asparagine" evidence="2">
    <location>
        <position position="74"/>
    </location>
</feature>
<feature type="glycosylation site" description="N-linked (GlcNAc...) asparagine" evidence="2">
    <location>
        <position position="79"/>
    </location>
</feature>
<feature type="glycosylation site" description="N-linked (GlcNAc...) asparagine" evidence="2">
    <location>
        <position position="111"/>
    </location>
</feature>
<feature type="glycosylation site" description="N-linked (GlcNAc...) asparagine" evidence="2">
    <location>
        <position position="236"/>
    </location>
</feature>
<feature type="glycosylation site" description="N-linked (GlcNAc...) asparagine" evidence="2">
    <location>
        <position position="333"/>
    </location>
</feature>
<feature type="glycosylation site" description="N-linked (GlcNAc...) asparagine" evidence="2">
    <location>
        <position position="385"/>
    </location>
</feature>
<feature type="glycosylation site" description="N-linked (GlcNAc...) asparagine" evidence="2">
    <location>
        <position position="403"/>
    </location>
</feature>
<feature type="glycosylation site" description="N-linked (GlcNAc...) asparagine" evidence="2">
    <location>
        <position position="451"/>
    </location>
</feature>
<name>LAC9_ARATH</name>
<keyword id="KW-0052">Apoplast</keyword>
<keyword id="KW-0186">Copper</keyword>
<keyword id="KW-0325">Glycoprotein</keyword>
<keyword id="KW-0439">Lignin degradation</keyword>
<keyword id="KW-0479">Metal-binding</keyword>
<keyword id="KW-0560">Oxidoreductase</keyword>
<keyword id="KW-1185">Reference proteome</keyword>
<keyword id="KW-0677">Repeat</keyword>
<keyword id="KW-0964">Secreted</keyword>
<keyword id="KW-0732">Signal</keyword>
<dbReference type="EC" id="1.10.3.2"/>
<dbReference type="EMBL" id="AL137189">
    <property type="protein sequence ID" value="CAB69833.1"/>
    <property type="molecule type" value="Genomic_DNA"/>
</dbReference>
<dbReference type="EMBL" id="CP002688">
    <property type="protein sequence ID" value="AED90292.1"/>
    <property type="molecule type" value="Genomic_DNA"/>
</dbReference>
<dbReference type="PIR" id="T45945">
    <property type="entry name" value="T45945"/>
</dbReference>
<dbReference type="RefSeq" id="NP_195725.1">
    <property type="nucleotide sequence ID" value="NM_120182.3"/>
</dbReference>
<dbReference type="SMR" id="Q9LFD1"/>
<dbReference type="STRING" id="3702.Q9LFD1"/>
<dbReference type="GlyCosmos" id="Q9LFD1">
    <property type="glycosylation" value="9 sites, No reported glycans"/>
</dbReference>
<dbReference type="GlyGen" id="Q9LFD1">
    <property type="glycosylation" value="9 sites"/>
</dbReference>
<dbReference type="PaxDb" id="3702-AT5G01050.1"/>
<dbReference type="EnsemblPlants" id="AT5G01050.1">
    <property type="protein sequence ID" value="AT5G01050.1"/>
    <property type="gene ID" value="AT5G01050"/>
</dbReference>
<dbReference type="GeneID" id="831812"/>
<dbReference type="Gramene" id="AT5G01050.1">
    <property type="protein sequence ID" value="AT5G01050.1"/>
    <property type="gene ID" value="AT5G01050"/>
</dbReference>
<dbReference type="KEGG" id="ath:AT5G01050"/>
<dbReference type="Araport" id="AT5G01050"/>
<dbReference type="TAIR" id="AT5G01050"/>
<dbReference type="eggNOG" id="KOG1263">
    <property type="taxonomic scope" value="Eukaryota"/>
</dbReference>
<dbReference type="HOGENOM" id="CLU_006504_6_3_1"/>
<dbReference type="InParanoid" id="Q9LFD1"/>
<dbReference type="OMA" id="LYYMTIS"/>
<dbReference type="PhylomeDB" id="Q9LFD1"/>
<dbReference type="BioCyc" id="ARA:AT5G01050-MONOMER"/>
<dbReference type="PRO" id="PR:Q9LFD1"/>
<dbReference type="Proteomes" id="UP000006548">
    <property type="component" value="Chromosome 5"/>
</dbReference>
<dbReference type="ExpressionAtlas" id="Q9LFD1">
    <property type="expression patterns" value="baseline and differential"/>
</dbReference>
<dbReference type="GO" id="GO:0048046">
    <property type="term" value="C:apoplast"/>
    <property type="evidence" value="ECO:0007669"/>
    <property type="project" value="UniProtKB-SubCell"/>
</dbReference>
<dbReference type="GO" id="GO:0005507">
    <property type="term" value="F:copper ion binding"/>
    <property type="evidence" value="ECO:0007669"/>
    <property type="project" value="InterPro"/>
</dbReference>
<dbReference type="GO" id="GO:0052716">
    <property type="term" value="F:hydroquinone:oxygen oxidoreductase activity"/>
    <property type="evidence" value="ECO:0007669"/>
    <property type="project" value="UniProtKB-EC"/>
</dbReference>
<dbReference type="GO" id="GO:0046274">
    <property type="term" value="P:lignin catabolic process"/>
    <property type="evidence" value="ECO:0007669"/>
    <property type="project" value="UniProtKB-KW"/>
</dbReference>
<dbReference type="CDD" id="cd13849">
    <property type="entry name" value="CuRO_1_LCC_plant"/>
    <property type="match status" value="1"/>
</dbReference>
<dbReference type="CDD" id="cd13875">
    <property type="entry name" value="CuRO_2_LCC_plant"/>
    <property type="match status" value="1"/>
</dbReference>
<dbReference type="CDD" id="cd13897">
    <property type="entry name" value="CuRO_3_LCC_plant"/>
    <property type="match status" value="1"/>
</dbReference>
<dbReference type="FunFam" id="2.60.40.420:FF:000135">
    <property type="entry name" value="Laccase"/>
    <property type="match status" value="1"/>
</dbReference>
<dbReference type="Gene3D" id="2.60.40.420">
    <property type="entry name" value="Cupredoxins - blue copper proteins"/>
    <property type="match status" value="3"/>
</dbReference>
<dbReference type="InterPro" id="IPR011707">
    <property type="entry name" value="Cu-oxidase-like_N"/>
</dbReference>
<dbReference type="InterPro" id="IPR001117">
    <property type="entry name" value="Cu-oxidase_2nd"/>
</dbReference>
<dbReference type="InterPro" id="IPR011706">
    <property type="entry name" value="Cu-oxidase_C"/>
</dbReference>
<dbReference type="InterPro" id="IPR045087">
    <property type="entry name" value="Cu-oxidase_fam"/>
</dbReference>
<dbReference type="InterPro" id="IPR008972">
    <property type="entry name" value="Cupredoxin"/>
</dbReference>
<dbReference type="InterPro" id="IPR034288">
    <property type="entry name" value="CuRO_1_LCC"/>
</dbReference>
<dbReference type="InterPro" id="IPR034285">
    <property type="entry name" value="CuRO_2_LCC"/>
</dbReference>
<dbReference type="InterPro" id="IPR034289">
    <property type="entry name" value="CuRO_3_LCC"/>
</dbReference>
<dbReference type="InterPro" id="IPR017761">
    <property type="entry name" value="Laccase"/>
</dbReference>
<dbReference type="NCBIfam" id="TIGR03389">
    <property type="entry name" value="laccase"/>
    <property type="match status" value="1"/>
</dbReference>
<dbReference type="PANTHER" id="PTHR11709:SF251">
    <property type="entry name" value="LACCASE-8-RELATED"/>
    <property type="match status" value="1"/>
</dbReference>
<dbReference type="PANTHER" id="PTHR11709">
    <property type="entry name" value="MULTI-COPPER OXIDASE"/>
    <property type="match status" value="1"/>
</dbReference>
<dbReference type="Pfam" id="PF00394">
    <property type="entry name" value="Cu-oxidase"/>
    <property type="match status" value="1"/>
</dbReference>
<dbReference type="Pfam" id="PF07731">
    <property type="entry name" value="Cu-oxidase_2"/>
    <property type="match status" value="1"/>
</dbReference>
<dbReference type="Pfam" id="PF07732">
    <property type="entry name" value="Cu-oxidase_3"/>
    <property type="match status" value="1"/>
</dbReference>
<dbReference type="SUPFAM" id="SSF49503">
    <property type="entry name" value="Cupredoxins"/>
    <property type="match status" value="3"/>
</dbReference>
<accession>Q9LFD1</accession>
<proteinExistence type="evidence at transcript level"/>
<protein>
    <recommendedName>
        <fullName>Laccase-9</fullName>
        <ecNumber>1.10.3.2</ecNumber>
    </recommendedName>
    <alternativeName>
        <fullName>Benzenediol:oxygen oxidoreductase 9</fullName>
    </alternativeName>
    <alternativeName>
        <fullName>Diphenol oxidase 9</fullName>
    </alternativeName>
    <alternativeName>
        <fullName>Urishiol oxidase 9</fullName>
    </alternativeName>
</protein>